<protein>
    <recommendedName>
        <fullName evidence="2">Envelope glycoprotein B</fullName>
        <shortName evidence="2">gB</shortName>
    </recommendedName>
</protein>
<comment type="function">
    <text evidence="2">Envelope glycoprotein that forms spikes at the surface of virion envelope. Essential for the initial attachment to heparan sulfate moieties of the host cell surface proteoglycans. Involved in fusion of viral and cellular membranes leading to virus entry into the host cell. Following initial binding to its host receptors, membrane fusion is mediated by the fusion machinery composed at least of gB and the heterodimer gH/gL. May be involved in the fusion between the virion envelope and the outer nuclear membrane during virion egress.</text>
</comment>
<comment type="subunit">
    <text evidence="2">Homotrimer; disulfide-linked. Binds to heparan sulfate proteoglycans. Interacts with gH/gL heterodimer.</text>
</comment>
<comment type="subcellular location">
    <subcellularLocation>
        <location evidence="2">Virion membrane</location>
        <topology evidence="2">Single-pass type I membrane protein</topology>
    </subcellularLocation>
    <subcellularLocation>
        <location evidence="2">Host cell membrane</location>
        <topology evidence="2">Single-pass type I membrane protein</topology>
    </subcellularLocation>
    <subcellularLocation>
        <location evidence="2">Host endosome membrane</location>
        <topology evidence="2">Single-pass type I membrane protein</topology>
    </subcellularLocation>
    <subcellularLocation>
        <location evidence="2">Host Golgi apparatus membrane</location>
        <topology evidence="2">Single-pass type I membrane protein</topology>
    </subcellularLocation>
    <text evidence="2">During virion morphogenesis, this protein probably accumulates in the endosomes and trans-Golgi where secondary envelopment occurs. It is probably transported to the cell surface from where it is endocytosed and directed to the trans-Golgi network (TGN).</text>
</comment>
<comment type="PTM">
    <text evidence="4">A proteolytic cleavage by host furin generates two subunits that remain linked by disulfide bonds.</text>
</comment>
<comment type="similarity">
    <text evidence="2">Belongs to the herpesviridae glycoprotein B family.</text>
</comment>
<dbReference type="EMBL" id="AY665713">
    <property type="protein sequence ID" value="AAT67290.1"/>
    <property type="molecule type" value="Genomic_DNA"/>
</dbReference>
<dbReference type="PIR" id="G36798">
    <property type="entry name" value="VGBEC6"/>
</dbReference>
<dbReference type="SMR" id="Q6DLH8"/>
<dbReference type="GlyCosmos" id="Q6DLH8">
    <property type="glycosylation" value="10 sites, No reported glycans"/>
</dbReference>
<dbReference type="KEGG" id="vg:1487545"/>
<dbReference type="Proteomes" id="UP000001189">
    <property type="component" value="Segment"/>
</dbReference>
<dbReference type="GO" id="GO:0044175">
    <property type="term" value="C:host cell endosome membrane"/>
    <property type="evidence" value="ECO:0007669"/>
    <property type="project" value="UniProtKB-SubCell"/>
</dbReference>
<dbReference type="GO" id="GO:0044178">
    <property type="term" value="C:host cell Golgi membrane"/>
    <property type="evidence" value="ECO:0007669"/>
    <property type="project" value="UniProtKB-SubCell"/>
</dbReference>
<dbReference type="GO" id="GO:0020002">
    <property type="term" value="C:host cell plasma membrane"/>
    <property type="evidence" value="ECO:0007669"/>
    <property type="project" value="UniProtKB-SubCell"/>
</dbReference>
<dbReference type="GO" id="GO:0016020">
    <property type="term" value="C:membrane"/>
    <property type="evidence" value="ECO:0007669"/>
    <property type="project" value="UniProtKB-KW"/>
</dbReference>
<dbReference type="GO" id="GO:0019031">
    <property type="term" value="C:viral envelope"/>
    <property type="evidence" value="ECO:0007669"/>
    <property type="project" value="UniProtKB-KW"/>
</dbReference>
<dbReference type="GO" id="GO:0055036">
    <property type="term" value="C:virion membrane"/>
    <property type="evidence" value="ECO:0007669"/>
    <property type="project" value="UniProtKB-SubCell"/>
</dbReference>
<dbReference type="GO" id="GO:0046718">
    <property type="term" value="P:symbiont entry into host cell"/>
    <property type="evidence" value="ECO:0007669"/>
    <property type="project" value="UniProtKB-KW"/>
</dbReference>
<dbReference type="GO" id="GO:0019062">
    <property type="term" value="P:virion attachment to host cell"/>
    <property type="evidence" value="ECO:0007669"/>
    <property type="project" value="UniProtKB-KW"/>
</dbReference>
<dbReference type="Gene3D" id="1.20.5.1890">
    <property type="match status" value="1"/>
</dbReference>
<dbReference type="Gene3D" id="2.30.29.100">
    <property type="match status" value="1"/>
</dbReference>
<dbReference type="Gene3D" id="2.30.30.1230">
    <property type="match status" value="1"/>
</dbReference>
<dbReference type="Gene3D" id="6.10.250.3280">
    <property type="match status" value="1"/>
</dbReference>
<dbReference type="HAMAP" id="MF_04032">
    <property type="entry name" value="HSV_GB"/>
    <property type="match status" value="1"/>
</dbReference>
<dbReference type="InterPro" id="IPR035377">
    <property type="entry name" value="Glycoprot_B_PH1"/>
</dbReference>
<dbReference type="InterPro" id="IPR035381">
    <property type="entry name" value="Glycoprot_B_PH2"/>
</dbReference>
<dbReference type="InterPro" id="IPR038631">
    <property type="entry name" value="Glycoprot_B_PH2_sf"/>
</dbReference>
<dbReference type="InterPro" id="IPR055341">
    <property type="entry name" value="Glycoprotein_B_ecto_C"/>
</dbReference>
<dbReference type="InterPro" id="IPR000234">
    <property type="entry name" value="Herpes_Glycoprot_B"/>
</dbReference>
<dbReference type="Pfam" id="PF17416">
    <property type="entry name" value="Glycoprot_B_PH1"/>
    <property type="match status" value="1"/>
</dbReference>
<dbReference type="Pfam" id="PF17417">
    <property type="entry name" value="Glycoprot_B_PH2"/>
    <property type="match status" value="1"/>
</dbReference>
<dbReference type="Pfam" id="PF00606">
    <property type="entry name" value="Glycoprotein_B"/>
    <property type="match status" value="1"/>
</dbReference>
<dbReference type="SUPFAM" id="SSF161008">
    <property type="entry name" value="Viral glycoprotein ectodomain-like"/>
    <property type="match status" value="1"/>
</dbReference>
<accession>Q6DLH8</accession>
<accession>P28922</accession>
<keyword id="KW-1015">Disulfide bond</keyword>
<keyword id="KW-0325">Glycoprotein</keyword>
<keyword id="KW-1032">Host cell membrane</keyword>
<keyword id="KW-1039">Host endosome</keyword>
<keyword id="KW-1040">Host Golgi apparatus</keyword>
<keyword id="KW-1043">Host membrane</keyword>
<keyword id="KW-0945">Host-virus interaction</keyword>
<keyword id="KW-0472">Membrane</keyword>
<keyword id="KW-1185">Reference proteome</keyword>
<keyword id="KW-0732">Signal</keyword>
<keyword id="KW-0812">Transmembrane</keyword>
<keyword id="KW-1133">Transmembrane helix</keyword>
<keyword id="KW-1161">Viral attachment to host cell</keyword>
<keyword id="KW-0261">Viral envelope protein</keyword>
<keyword id="KW-0946">Virion</keyword>
<keyword id="KW-1160">Virus entry into host cell</keyword>
<gene>
    <name evidence="2" type="primary">gB</name>
    <name type="synonym">GP14</name>
    <name type="ordered locus">33</name>
</gene>
<name>GB_EHV1B</name>
<feature type="signal peptide" evidence="1">
    <location>
        <begin position="1"/>
        <end position="86"/>
    </location>
</feature>
<feature type="chain" id="PRO_0000038172" description="Envelope glycoprotein B">
    <location>
        <begin position="87"/>
        <end position="980"/>
    </location>
</feature>
<feature type="topological domain" description="Virion surface" evidence="2">
    <location>
        <begin position="87"/>
        <end position="849"/>
    </location>
</feature>
<feature type="transmembrane region" description="Helical" evidence="2">
    <location>
        <begin position="850"/>
        <end position="870"/>
    </location>
</feature>
<feature type="topological domain" description="Intravirion" evidence="2">
    <location>
        <begin position="871"/>
        <end position="980"/>
    </location>
</feature>
<feature type="region of interest" description="Disordered" evidence="3">
    <location>
        <begin position="1"/>
        <end position="20"/>
    </location>
</feature>
<feature type="region of interest" description="Disordered" evidence="3">
    <location>
        <begin position="88"/>
        <end position="118"/>
    </location>
</feature>
<feature type="region of interest" description="Involved in fusion and/or binding to host membrane" evidence="2">
    <location>
        <begin position="197"/>
        <end position="203"/>
    </location>
</feature>
<feature type="region of interest" description="Involved in fusion and/or binding to host membrane" evidence="2">
    <location>
        <begin position="282"/>
        <end position="290"/>
    </location>
</feature>
<feature type="region of interest" description="Disordered" evidence="3">
    <location>
        <begin position="505"/>
        <end position="535"/>
    </location>
</feature>
<feature type="region of interest" description="Hydrophobic membrane proximal region" evidence="2">
    <location>
        <begin position="794"/>
        <end position="847"/>
    </location>
</feature>
<feature type="region of interest" description="Hydrophobic membrane proximal region">
    <location>
        <begin position="823"/>
        <end position="843"/>
    </location>
</feature>
<feature type="short sequence motif" description="Golgi targeting" evidence="2">
    <location>
        <begin position="925"/>
        <end position="928"/>
    </location>
</feature>
<feature type="short sequence motif" description="Internalization motif" evidence="2">
    <location>
        <begin position="965"/>
        <end position="968"/>
    </location>
</feature>
<feature type="compositionally biased region" description="Polar residues" evidence="3">
    <location>
        <begin position="1"/>
        <end position="14"/>
    </location>
</feature>
<feature type="compositionally biased region" description="Low complexity" evidence="3">
    <location>
        <begin position="96"/>
        <end position="118"/>
    </location>
</feature>
<feature type="compositionally biased region" description="Low complexity" evidence="3">
    <location>
        <begin position="505"/>
        <end position="516"/>
    </location>
</feature>
<feature type="site" description="Cleavage; by host furin" evidence="1">
    <location>
        <begin position="521"/>
        <end position="522"/>
    </location>
</feature>
<feature type="glycosylation site" description="N-linked (GlcNAc...) asparagine; by host" evidence="2">
    <location>
        <position position="165"/>
    </location>
</feature>
<feature type="glycosylation site" description="N-linked (GlcNAc...) asparagine; by host" evidence="2">
    <location>
        <position position="275"/>
    </location>
</feature>
<feature type="glycosylation site" description="N-linked (GlcNAc...) asparagine; by host" evidence="2">
    <location>
        <position position="380"/>
    </location>
</feature>
<feature type="glycosylation site" description="N-linked (GlcNAc...) asparagine; by host" evidence="2">
    <location>
        <position position="423"/>
    </location>
</feature>
<feature type="glycosylation site" description="N-linked (GlcNAc...) asparagine; by host" evidence="2">
    <location>
        <position position="497"/>
    </location>
</feature>
<feature type="glycosylation site" description="N-linked (GlcNAc...) asparagine; by host" evidence="2">
    <location>
        <position position="514"/>
    </location>
</feature>
<feature type="glycosylation site" description="N-linked (GlcNAc...) asparagine; by host" evidence="2">
    <location>
        <position position="515"/>
    </location>
</feature>
<feature type="glycosylation site" description="N-linked (GlcNAc...) asparagine; by host" evidence="2">
    <location>
        <position position="560"/>
    </location>
</feature>
<feature type="glycosylation site" description="N-linked (GlcNAc...) asparagine; by host" evidence="2">
    <location>
        <position position="727"/>
    </location>
</feature>
<feature type="glycosylation site" description="N-linked (GlcNAc...) asparagine; by host" evidence="2">
    <location>
        <position position="749"/>
    </location>
</feature>
<feature type="disulfide bond" evidence="2">
    <location>
        <begin position="140"/>
        <end position="647"/>
    </location>
</feature>
<feature type="disulfide bond" evidence="2">
    <location>
        <begin position="157"/>
        <end position="603"/>
    </location>
</feature>
<feature type="disulfide bond" evidence="2">
    <location>
        <begin position="231"/>
        <end position="296"/>
    </location>
</feature>
<feature type="disulfide bond" evidence="2">
    <location>
        <begin position="389"/>
        <end position="437"/>
    </location>
</feature>
<feature type="disulfide bond" evidence="2">
    <location>
        <begin position="668"/>
        <end position="708"/>
    </location>
</feature>
<proteinExistence type="inferred from homology"/>
<reference key="1">
    <citation type="journal article" date="1992" name="Virology">
        <title>The DNA sequence of equine herpesvirus-1.</title>
        <authorList>
            <person name="Telford E.A.R."/>
            <person name="Watson M.S."/>
            <person name="McBride K."/>
            <person name="Davison A.J."/>
        </authorList>
    </citation>
    <scope>NUCLEOTIDE SEQUENCE [LARGE SCALE GENOMIC DNA]</scope>
</reference>
<evidence type="ECO:0000255" key="1"/>
<evidence type="ECO:0000255" key="2">
    <source>
        <dbReference type="HAMAP-Rule" id="MF_04032"/>
    </source>
</evidence>
<evidence type="ECO:0000256" key="3">
    <source>
        <dbReference type="SAM" id="MobiDB-lite"/>
    </source>
</evidence>
<evidence type="ECO:0000305" key="4"/>
<sequence>MSSGCRSVGGSTWGNWRGDGGDLRQRRVLSPVCSAPAAGSWIGSQLGNVGNLLATPHPLGKPASSRVGTIVLACLLLFGSCVVRAVPTTPSPPTSTPTSMSTHSHGTVDPTLLPTETPDPLRLAVRESGILAEDGDFYTCPPPTGSTVVRIEPPRTCPKFDLGRNFTEGIAVIFKENIAPYKFRANVYYKDIVVTRVWKGYSHTSLSDRYNDRVPVSVEEIFGLIDSKGKCSSKAEYLRDNIMHHAYHDDEDEVELDLVPSKFATPGARAWQTTNDTTSYVGWMPWRHYTSTSVNCIVEEVEARSVYPYDSFALSTGDIVYASPFYGLRAAARIEHNSYAQERFRQVEGYRPRDLDSKLQAEEPVTKNFITTPHVTVSWNWTEKKVEACTLTKWKEVDELVRDEFRGSYRFTIRSISSTFISNTTQFKLESAPLTECVSKEAKEAIDSIYKKQYESTHVFSGDVEYYLARGGFLIAFRPMLSNELARLYLNELVRSNRTYDLKNLLNPNANNNNNTTRRRRSLLSVPEPQPTQDGVHREQILHRLHKRAVEATAGTDSSNVTAKQLELIKTTSSIEFAMLQFAYDHIQSHVNEMLSRIATAWCTLQNKERTLWNEMVKINPSAIVSATLDERVAARVLGDVIAITHCAKIEGNVYLQNSMRSMDSNTCYSRPPVTFTITKNANNRGSIEGQLGEENEIFTERKLIEPCALNQKRYFKFGKEYVYYENYTFVRKVPPTEIEVISTYVELNLTLLEDREFLPLEVYTRAELEDTGLLDYSEIQRRNQLHALRFYDIDSVVNVDNTAVIMQGIASFFKGLGKVGEAVGTLVLGAAGAVVSTVSGIASFLNNPFGGLAIGLLVIAGLVAAFFAYRYVMQIRSNPMKALYPITTKALKNKAKTSYGQNEEDDGSDFDEAKLEEAREMIKYMSMVSALEKQEKKAIKKNSGVGLIASNVSKLALRRRGPKYTRLQQNDTMENEKMV</sequence>
<organismHost>
    <name type="scientific">Equus caballus</name>
    <name type="common">Horse</name>
    <dbReference type="NCBI Taxonomy" id="9796"/>
</organismHost>
<organism>
    <name type="scientific">Equine herpesvirus 1 (strain Ab4p)</name>
    <name type="common">EHV-1</name>
    <name type="synonym">Equine abortion virus</name>
    <dbReference type="NCBI Taxonomy" id="31520"/>
    <lineage>
        <taxon>Viruses</taxon>
        <taxon>Duplodnaviria</taxon>
        <taxon>Heunggongvirae</taxon>
        <taxon>Peploviricota</taxon>
        <taxon>Herviviricetes</taxon>
        <taxon>Herpesvirales</taxon>
        <taxon>Orthoherpesviridae</taxon>
        <taxon>Alphaherpesvirinae</taxon>
        <taxon>Varicellovirus</taxon>
        <taxon>Varicellovirus equidalpha1</taxon>
        <taxon>Equid alphaherpesvirus 1</taxon>
    </lineage>
</organism>